<dbReference type="EMBL" id="AB065090">
    <property type="protein sequence ID" value="BAB62003.1"/>
    <property type="molecule type" value="mRNA"/>
</dbReference>
<dbReference type="RefSeq" id="NP_446101.1">
    <property type="nucleotide sequence ID" value="NM_053649.1"/>
</dbReference>
<dbReference type="SMR" id="Q924S4"/>
<dbReference type="FunCoup" id="Q924S4">
    <property type="interactions" value="324"/>
</dbReference>
<dbReference type="STRING" id="10116.ENSRNOP00000074509"/>
<dbReference type="GlyCosmos" id="Q924S4">
    <property type="glycosylation" value="6 sites, No reported glycans"/>
</dbReference>
<dbReference type="GlyGen" id="Q924S4">
    <property type="glycosylation" value="6 sites"/>
</dbReference>
<dbReference type="PhosphoSitePlus" id="Q924S4"/>
<dbReference type="PaxDb" id="10116-ENSRNOP00000013543"/>
<dbReference type="GeneID" id="114107"/>
<dbReference type="KEGG" id="rno:114107"/>
<dbReference type="UCSC" id="RGD:620789">
    <property type="organism name" value="rat"/>
</dbReference>
<dbReference type="AGR" id="RGD:620789"/>
<dbReference type="CTD" id="83999"/>
<dbReference type="RGD" id="620789">
    <property type="gene designation" value="Kremen1"/>
</dbReference>
<dbReference type="eggNOG" id="KOG4157">
    <property type="taxonomic scope" value="Eukaryota"/>
</dbReference>
<dbReference type="InParanoid" id="Q924S4"/>
<dbReference type="OrthoDB" id="14120at9989"/>
<dbReference type="PhylomeDB" id="Q924S4"/>
<dbReference type="Reactome" id="R-RNO-3772470">
    <property type="pathway name" value="Negative regulation of TCF-dependent signaling by WNT ligand antagonists"/>
</dbReference>
<dbReference type="PRO" id="PR:Q924S4"/>
<dbReference type="Proteomes" id="UP000002494">
    <property type="component" value="Unplaced"/>
</dbReference>
<dbReference type="GO" id="GO:0043025">
    <property type="term" value="C:neuronal cell body"/>
    <property type="evidence" value="ECO:0000266"/>
    <property type="project" value="RGD"/>
</dbReference>
<dbReference type="GO" id="GO:0005886">
    <property type="term" value="C:plasma membrane"/>
    <property type="evidence" value="ECO:0000318"/>
    <property type="project" value="GO_Central"/>
</dbReference>
<dbReference type="GO" id="GO:0004888">
    <property type="term" value="F:transmembrane signaling receptor activity"/>
    <property type="evidence" value="ECO:0000318"/>
    <property type="project" value="GO_Central"/>
</dbReference>
<dbReference type="GO" id="GO:0006915">
    <property type="term" value="P:apoptotic process"/>
    <property type="evidence" value="ECO:0000266"/>
    <property type="project" value="RGD"/>
</dbReference>
<dbReference type="GO" id="GO:0060173">
    <property type="term" value="P:limb development"/>
    <property type="evidence" value="ECO:0000266"/>
    <property type="project" value="RGD"/>
</dbReference>
<dbReference type="GO" id="GO:0007517">
    <property type="term" value="P:muscle organ development"/>
    <property type="evidence" value="ECO:0000303"/>
    <property type="project" value="RGD"/>
</dbReference>
<dbReference type="GO" id="GO:0048681">
    <property type="term" value="P:negative regulation of axon regeneration"/>
    <property type="evidence" value="ECO:0000266"/>
    <property type="project" value="RGD"/>
</dbReference>
<dbReference type="GO" id="GO:0090090">
    <property type="term" value="P:negative regulation of canonical Wnt signaling pathway"/>
    <property type="evidence" value="ECO:0000266"/>
    <property type="project" value="RGD"/>
</dbReference>
<dbReference type="GO" id="GO:0030279">
    <property type="term" value="P:negative regulation of ossification"/>
    <property type="evidence" value="ECO:0000266"/>
    <property type="project" value="RGD"/>
</dbReference>
<dbReference type="GO" id="GO:0007399">
    <property type="term" value="P:nervous system development"/>
    <property type="evidence" value="ECO:0000303"/>
    <property type="project" value="RGD"/>
</dbReference>
<dbReference type="GO" id="GO:0007165">
    <property type="term" value="P:signal transduction"/>
    <property type="evidence" value="ECO:0000318"/>
    <property type="project" value="GO_Central"/>
</dbReference>
<dbReference type="GO" id="GO:0016055">
    <property type="term" value="P:Wnt signaling pathway"/>
    <property type="evidence" value="ECO:0007669"/>
    <property type="project" value="UniProtKB-KW"/>
</dbReference>
<dbReference type="CDD" id="cd00041">
    <property type="entry name" value="CUB"/>
    <property type="match status" value="1"/>
</dbReference>
<dbReference type="CDD" id="cd00108">
    <property type="entry name" value="KR"/>
    <property type="match status" value="1"/>
</dbReference>
<dbReference type="FunFam" id="2.40.20.10:FF:000006">
    <property type="entry name" value="Kremen protein 2"/>
    <property type="match status" value="1"/>
</dbReference>
<dbReference type="Gene3D" id="2.40.20.10">
    <property type="entry name" value="Plasminogen Kringle 4"/>
    <property type="match status" value="1"/>
</dbReference>
<dbReference type="Gene3D" id="2.60.120.290">
    <property type="entry name" value="Spermadhesin, CUB domain"/>
    <property type="match status" value="1"/>
</dbReference>
<dbReference type="InterPro" id="IPR000859">
    <property type="entry name" value="CUB_dom"/>
</dbReference>
<dbReference type="InterPro" id="IPR017076">
    <property type="entry name" value="Kremen"/>
</dbReference>
<dbReference type="InterPro" id="IPR051836">
    <property type="entry name" value="Kremen_rcpt"/>
</dbReference>
<dbReference type="InterPro" id="IPR000001">
    <property type="entry name" value="Kringle"/>
</dbReference>
<dbReference type="InterPro" id="IPR013806">
    <property type="entry name" value="Kringle-like"/>
</dbReference>
<dbReference type="InterPro" id="IPR018056">
    <property type="entry name" value="Kringle_CS"/>
</dbReference>
<dbReference type="InterPro" id="IPR038178">
    <property type="entry name" value="Kringle_sf"/>
</dbReference>
<dbReference type="InterPro" id="IPR035914">
    <property type="entry name" value="Sperma_CUB_dom_sf"/>
</dbReference>
<dbReference type="InterPro" id="IPR002889">
    <property type="entry name" value="WSC_carb-bd"/>
</dbReference>
<dbReference type="PANTHER" id="PTHR24269">
    <property type="entry name" value="KREMEN PROTEIN"/>
    <property type="match status" value="1"/>
</dbReference>
<dbReference type="PANTHER" id="PTHR24269:SF13">
    <property type="entry name" value="KREMEN PROTEIN 1"/>
    <property type="match status" value="1"/>
</dbReference>
<dbReference type="Pfam" id="PF00431">
    <property type="entry name" value="CUB"/>
    <property type="match status" value="1"/>
</dbReference>
<dbReference type="Pfam" id="PF00051">
    <property type="entry name" value="Kringle"/>
    <property type="match status" value="1"/>
</dbReference>
<dbReference type="Pfam" id="PF01822">
    <property type="entry name" value="WSC"/>
    <property type="match status" value="1"/>
</dbReference>
<dbReference type="PIRSF" id="PIRSF036961">
    <property type="entry name" value="Kremen"/>
    <property type="match status" value="1"/>
</dbReference>
<dbReference type="PRINTS" id="PR00018">
    <property type="entry name" value="KRINGLE"/>
</dbReference>
<dbReference type="SMART" id="SM00042">
    <property type="entry name" value="CUB"/>
    <property type="match status" value="1"/>
</dbReference>
<dbReference type="SMART" id="SM00130">
    <property type="entry name" value="KR"/>
    <property type="match status" value="1"/>
</dbReference>
<dbReference type="SUPFAM" id="SSF57440">
    <property type="entry name" value="Kringle-like"/>
    <property type="match status" value="1"/>
</dbReference>
<dbReference type="SUPFAM" id="SSF49854">
    <property type="entry name" value="Spermadhesin, CUB domain"/>
    <property type="match status" value="1"/>
</dbReference>
<dbReference type="PROSITE" id="PS01180">
    <property type="entry name" value="CUB"/>
    <property type="match status" value="1"/>
</dbReference>
<dbReference type="PROSITE" id="PS00021">
    <property type="entry name" value="KRINGLE_1"/>
    <property type="match status" value="1"/>
</dbReference>
<dbReference type="PROSITE" id="PS50070">
    <property type="entry name" value="KRINGLE_2"/>
    <property type="match status" value="1"/>
</dbReference>
<dbReference type="PROSITE" id="PS51212">
    <property type="entry name" value="WSC"/>
    <property type="match status" value="1"/>
</dbReference>
<proteinExistence type="evidence at transcript level"/>
<gene>
    <name type="primary">Kremen1</name>
    <name type="synonym">Kremen</name>
</gene>
<keyword id="KW-1003">Cell membrane</keyword>
<keyword id="KW-1015">Disulfide bond</keyword>
<keyword id="KW-0325">Glycoprotein</keyword>
<keyword id="KW-0420">Kringle</keyword>
<keyword id="KW-0472">Membrane</keyword>
<keyword id="KW-1185">Reference proteome</keyword>
<keyword id="KW-0732">Signal</keyword>
<keyword id="KW-0812">Transmembrane</keyword>
<keyword id="KW-1133">Transmembrane helix</keyword>
<keyword id="KW-0879">Wnt signaling pathway</keyword>
<reference key="1">
    <citation type="submission" date="2001-07" db="EMBL/GenBank/DDBJ databases">
        <authorList>
            <person name="Nakamura T."/>
            <person name="Nakamura T."/>
        </authorList>
    </citation>
    <scope>NUCLEOTIDE SEQUENCE [MRNA]</scope>
</reference>
<organism>
    <name type="scientific">Rattus norvegicus</name>
    <name type="common">Rat</name>
    <dbReference type="NCBI Taxonomy" id="10116"/>
    <lineage>
        <taxon>Eukaryota</taxon>
        <taxon>Metazoa</taxon>
        <taxon>Chordata</taxon>
        <taxon>Craniata</taxon>
        <taxon>Vertebrata</taxon>
        <taxon>Euteleostomi</taxon>
        <taxon>Mammalia</taxon>
        <taxon>Eutheria</taxon>
        <taxon>Euarchontoglires</taxon>
        <taxon>Glires</taxon>
        <taxon>Rodentia</taxon>
        <taxon>Myomorpha</taxon>
        <taxon>Muroidea</taxon>
        <taxon>Muridae</taxon>
        <taxon>Murinae</taxon>
        <taxon>Rattus</taxon>
    </lineage>
</organism>
<evidence type="ECO:0000250" key="1">
    <source>
        <dbReference type="UniProtKB" id="Q90Y90"/>
    </source>
</evidence>
<evidence type="ECO:0000250" key="2">
    <source>
        <dbReference type="UniProtKB" id="Q96MU8"/>
    </source>
</evidence>
<evidence type="ECO:0000250" key="3">
    <source>
        <dbReference type="UniProtKB" id="Q99N43"/>
    </source>
</evidence>
<evidence type="ECO:0000255" key="4"/>
<evidence type="ECO:0000255" key="5">
    <source>
        <dbReference type="PROSITE-ProRule" id="PRU00059"/>
    </source>
</evidence>
<evidence type="ECO:0000255" key="6">
    <source>
        <dbReference type="PROSITE-ProRule" id="PRU00121"/>
    </source>
</evidence>
<evidence type="ECO:0000255" key="7">
    <source>
        <dbReference type="PROSITE-ProRule" id="PRU00558"/>
    </source>
</evidence>
<evidence type="ECO:0000305" key="8"/>
<name>KREM1_RAT</name>
<sequence>MAPPAARLALLSAAALTLAARPAPGPRPSPECFTANGADYRGTQSWTALQGGKPCLFWNETFQHPYNTLKYPNGEGGLGEHNYCRNPDGDVSPWCYVAEHEDGVYWKYCEIPACQMPGNLGCYKDHGNPPPLTGTSKTSNKLTIQTCISFCRSQRFKFAGMESGYACFCGNNPDYWKHGEAASTECNNVCFGDHTQPCGGDGRIILFDTLVGACGGNYSSMAAVVYSPDFPDTYATGRVCYWTIRVPGASRIHFNFTIFDIRDSADMVELLDGYTHRVLVRFDGRSRPPLSFNVSLDFVILYFFSDRINQAQGFAVLYQATKEEPPQERPAINQTLAEVITEQANLSVSAAHSSKVLYVITSSPSHPPQTVPGSHSWVPSVGASGHRVEGWTVYGLATLLILTVTAVVAKILLHVTFKSHRVTASGDLRDCRQPGTSGEIWTIFYEPSTTISIFKKKLKGQSQQDDRNPLVSD</sequence>
<protein>
    <recommendedName>
        <fullName>Kremen protein 1</fullName>
    </recommendedName>
    <alternativeName>
        <fullName>Dickkopf receptor</fullName>
    </alternativeName>
    <alternativeName>
        <fullName>Kringle domain-containing transmembrane protein 1</fullName>
    </alternativeName>
    <alternativeName>
        <fullName>Kringle-containing protein marking the eye and the nose</fullName>
    </alternativeName>
</protein>
<accession>Q924S4</accession>
<feature type="signal peptide" evidence="4">
    <location>
        <begin position="1"/>
        <end position="19"/>
    </location>
</feature>
<feature type="chain" id="PRO_0000021566" description="Kremen protein 1">
    <location>
        <begin position="20"/>
        <end position="473"/>
    </location>
</feature>
<feature type="topological domain" description="Extracellular" evidence="4">
    <location>
        <begin position="21"/>
        <end position="392"/>
    </location>
</feature>
<feature type="transmembrane region" description="Helical" evidence="4">
    <location>
        <begin position="393"/>
        <end position="413"/>
    </location>
</feature>
<feature type="topological domain" description="Cytoplasmic" evidence="4">
    <location>
        <begin position="414"/>
        <end position="473"/>
    </location>
</feature>
<feature type="domain" description="Kringle" evidence="6">
    <location>
        <begin position="31"/>
        <end position="114"/>
    </location>
</feature>
<feature type="domain" description="WSC" evidence="7">
    <location>
        <begin position="116"/>
        <end position="210"/>
    </location>
</feature>
<feature type="domain" description="CUB" evidence="5">
    <location>
        <begin position="214"/>
        <end position="321"/>
    </location>
</feature>
<feature type="region of interest" description="Essential for apoptotic activity" evidence="3">
    <location>
        <begin position="414"/>
        <end position="473"/>
    </location>
</feature>
<feature type="glycosylation site" description="N-linked (GlcNAc...) asparagine" evidence="4">
    <location>
        <position position="59"/>
    </location>
</feature>
<feature type="glycosylation site" description="N-linked (GlcNAc...) asparagine" evidence="4">
    <location>
        <position position="217"/>
    </location>
</feature>
<feature type="glycosylation site" description="N-linked (GlcNAc...) asparagine" evidence="4">
    <location>
        <position position="255"/>
    </location>
</feature>
<feature type="glycosylation site" description="N-linked (GlcNAc...) asparagine" evidence="4">
    <location>
        <position position="293"/>
    </location>
</feature>
<feature type="glycosylation site" description="N-linked (GlcNAc...) asparagine" evidence="4">
    <location>
        <position position="333"/>
    </location>
</feature>
<feature type="glycosylation site" description="N-linked (GlcNAc...) asparagine" evidence="4">
    <location>
        <position position="345"/>
    </location>
</feature>
<feature type="disulfide bond" evidence="2">
    <location>
        <begin position="32"/>
        <end position="114"/>
    </location>
</feature>
<feature type="disulfide bond" evidence="2">
    <location>
        <begin position="55"/>
        <end position="95"/>
    </location>
</feature>
<feature type="disulfide bond" evidence="2">
    <location>
        <begin position="84"/>
        <end position="109"/>
    </location>
</feature>
<feature type="disulfide bond" evidence="2">
    <location>
        <begin position="122"/>
        <end position="186"/>
    </location>
</feature>
<feature type="disulfide bond" evidence="2">
    <location>
        <begin position="147"/>
        <end position="167"/>
    </location>
</feature>
<feature type="disulfide bond" evidence="2">
    <location>
        <begin position="151"/>
        <end position="169"/>
    </location>
</feature>
<feature type="disulfide bond" evidence="2">
    <location>
        <begin position="190"/>
        <end position="198"/>
    </location>
</feature>
<feature type="disulfide bond" evidence="2">
    <location>
        <begin position="214"/>
        <end position="240"/>
    </location>
</feature>
<comment type="function">
    <text evidence="1 3">Receptor for Dickkopf proteins. Cooperates with DKK1/2 to inhibit Wnt/beta-catenin signaling by promoting the endocytosis of Wnt receptors LRP5 and LRP6. In the absence of DKK1, potentiates Wnt-beta-catenin signaling by maintaining LRP5 or LRP6 at the cell membrane. Can trigger apoptosis in a Wnt-independent manner and this apoptotic activity is inhibited upon binding of the ligand DKK1. Plays a role in limb development; attenuates Wnt signaling in the developing limb to allow normal limb patterning and can also negatively regulate bone formation. Modulates cell fate decisions in the developing cochlea with an inhibitory role in hair cell fate specification.</text>
</comment>
<comment type="subunit">
    <text evidence="2">Forms a ternary complex with DKK1 and LRP6. Interacts with LRP6 in a DKK1-dependent manner. Interacts with DKK1 and RSPO1 (via FU repeats).</text>
</comment>
<comment type="subcellular location">
    <subcellularLocation>
        <location evidence="3">Cell membrane</location>
        <topology evidence="8">Single-pass type I membrane protein</topology>
    </subcellularLocation>
</comment>